<sequence>MPPAHHGSGGRRRPGRGNKGKRDTEAGMTASPDPGYMRPETHAAPSQQTDVRSPASAREHRNADVGVAAPDALTPNAGEQKEVEGVAKVNVAVSSDQPPDWAPSQSDLPPSLSPTTASRPATSSRSPRARSRHSPVASSSAFSSPAPSASALTSASGVPEAPLAAPELKHTLAADEGNPEPRLEGPVERLHARQENPLTDSSDGSYILLEEGESQRACLDRKNRHLRQTTPPGVWTTADLASQNSHSASFASGFRRALLPSGGSGDHDEQASDCRASLRGMQRPCFGSPSTDTRMGAAEGLPLASRRRRQHWRRELRAFGAVALACLRASWHGMKRARLRATRWIDRNAATVRVACYTFLLLVTSTGNTICFKKMIDKMPNYSPCLTQVTTVVFVPVFFALSLYTDYAGGLPQEMADFPKRNFAVMGFLDSFSGVMAIIGAVHTTGTTQVVLQQSCIVFSLLASIVMLRKRFHAAHYLGALVIILGVLVVKLPDLLHPSSDGGGDVFVFNLLYLLSNLPTAVSCVYKEVAFRGVEMGTNYLQAWVALFQFLIGFLVLPLNALPVLGPQRVPLAELPASLWNGTRCLFGFNTIVTNCGGAGNMESPCDNCEGAWKYVGMYLSFNLLYNMFIIFVVKSGGAALTFLVSTLRLPVTALAFCSRAIMGDRAVPPKATDFYGLLVLILGLVIYRAGGIMKRRAQRRAVAAARGHTSSPMMLTPREEEQIGTIFVEEVFAAGELEDGGVTEEDETDDDTSEVEVHPVFSSVVASEPPHVYVHTKRHSHSDGGYHKLPACGSSPAAFTPFTQRMPGTGSESCSRRRNRDGDDERSPRSHACSFDEETGFAGGTGTGRHFSSPGTALSPNRVGGYEPPSMHAVQPAVIGKSRANNGCI</sequence>
<organism evidence="11">
    <name type="scientific">Toxoplasma gondii</name>
    <dbReference type="NCBI Taxonomy" id="5811"/>
    <lineage>
        <taxon>Eukaryota</taxon>
        <taxon>Sar</taxon>
        <taxon>Alveolata</taxon>
        <taxon>Apicomplexa</taxon>
        <taxon>Conoidasida</taxon>
        <taxon>Coccidia</taxon>
        <taxon>Eucoccidiorida</taxon>
        <taxon>Eimeriorina</taxon>
        <taxon>Sarcocystidae</taxon>
        <taxon>Toxoplasma</taxon>
    </lineage>
</organism>
<dbReference type="EMBL" id="KJ130040">
    <property type="protein sequence ID" value="AIA26429.1"/>
    <property type="molecule type" value="mRNA"/>
</dbReference>
<dbReference type="SMR" id="A0A059XKS9"/>
<dbReference type="VEuPathDB" id="ToxoDB:TGARI_313930A"/>
<dbReference type="VEuPathDB" id="ToxoDB:TGCAST_313930A"/>
<dbReference type="VEuPathDB" id="ToxoDB:TGCOUG_313930A"/>
<dbReference type="VEuPathDB" id="ToxoDB:TGDOM2_313930"/>
<dbReference type="VEuPathDB" id="ToxoDB:TGFOU_313930"/>
<dbReference type="VEuPathDB" id="ToxoDB:TGGT1_313930"/>
<dbReference type="VEuPathDB" id="ToxoDB:TGMAS_313930A"/>
<dbReference type="VEuPathDB" id="ToxoDB:TGME49_313930"/>
<dbReference type="VEuPathDB" id="ToxoDB:TGP89_313930A"/>
<dbReference type="VEuPathDB" id="ToxoDB:TGPRC2_313930"/>
<dbReference type="VEuPathDB" id="ToxoDB:TGRH88_053060"/>
<dbReference type="VEuPathDB" id="ToxoDB:TGRUB_313930A"/>
<dbReference type="VEuPathDB" id="ToxoDB:TGVAND_313930A"/>
<dbReference type="VEuPathDB" id="ToxoDB:TGVEG_313930"/>
<dbReference type="GO" id="GO:0005774">
    <property type="term" value="C:vacuolar membrane"/>
    <property type="evidence" value="ECO:0007669"/>
    <property type="project" value="UniProtKB-SubCell"/>
</dbReference>
<dbReference type="GO" id="GO:0006865">
    <property type="term" value="P:amino acid transport"/>
    <property type="evidence" value="ECO:0007669"/>
    <property type="project" value="UniProtKB-KW"/>
</dbReference>
<dbReference type="InterPro" id="IPR013936">
    <property type="entry name" value="CRT-like"/>
</dbReference>
<dbReference type="PANTHER" id="PTHR31326">
    <property type="entry name" value="PROTEIN CLT2, CHLOROPLASTIC"/>
    <property type="match status" value="1"/>
</dbReference>
<dbReference type="PANTHER" id="PTHR31326:SF1">
    <property type="entry name" value="PROTEIN CLT2, CHLOROPLASTIC"/>
    <property type="match status" value="1"/>
</dbReference>
<dbReference type="Pfam" id="PF08627">
    <property type="entry name" value="CRT-like"/>
    <property type="match status" value="1"/>
</dbReference>
<dbReference type="SUPFAM" id="SSF103481">
    <property type="entry name" value="Multidrug resistance efflux transporter EmrE"/>
    <property type="match status" value="1"/>
</dbReference>
<keyword id="KW-0029">Amino-acid transport</keyword>
<keyword id="KW-1015">Disulfide bond</keyword>
<keyword id="KW-0325">Glycoprotein</keyword>
<keyword id="KW-0472">Membrane</keyword>
<keyword id="KW-0812">Transmembrane</keyword>
<keyword id="KW-1133">Transmembrane helix</keyword>
<keyword id="KW-0813">Transport</keyword>
<keyword id="KW-0926">Vacuole</keyword>
<accession>A0A059XKS9</accession>
<feature type="chain" id="PRO_0000460167" description="Chloroquine resistance transporter">
    <location>
        <begin position="1"/>
        <end position="890"/>
    </location>
</feature>
<feature type="topological domain" description="Cytoplasmic" evidence="10">
    <location>
        <begin position="1"/>
        <end position="349"/>
    </location>
</feature>
<feature type="transmembrane region" description="Helical" evidence="3">
    <location>
        <begin position="350"/>
        <end position="372"/>
    </location>
</feature>
<feature type="topological domain" description="Vacuolar" evidence="10">
    <location>
        <begin position="373"/>
        <end position="391"/>
    </location>
</feature>
<feature type="transmembrane region" description="Helical" evidence="3">
    <location>
        <begin position="392"/>
        <end position="412"/>
    </location>
</feature>
<feature type="topological domain" description="Cytoplasmic" evidence="10">
    <location>
        <begin position="413"/>
        <end position="422"/>
    </location>
</feature>
<feature type="transmembrane region" description="Helical" evidence="3">
    <location>
        <begin position="423"/>
        <end position="443"/>
    </location>
</feature>
<feature type="topological domain" description="Vacuolar" evidence="10">
    <location>
        <begin position="444"/>
        <end position="447"/>
    </location>
</feature>
<feature type="transmembrane region" description="Helical" evidence="3">
    <location>
        <begin position="448"/>
        <end position="468"/>
    </location>
</feature>
<feature type="topological domain" description="Cytoplasmic" evidence="10">
    <location>
        <begin position="469"/>
        <end position="471"/>
    </location>
</feature>
<feature type="transmembrane region" description="Helical" evidence="3">
    <location>
        <begin position="472"/>
        <end position="492"/>
    </location>
</feature>
<feature type="topological domain" description="Vacuolar" evidence="10">
    <location>
        <begin position="493"/>
        <end position="505"/>
    </location>
</feature>
<feature type="transmembrane region" description="Helical" evidence="3">
    <location>
        <begin position="506"/>
        <end position="526"/>
    </location>
</feature>
<feature type="topological domain" description="Cytoplasmic" evidence="10">
    <location>
        <begin position="527"/>
        <end position="544"/>
    </location>
</feature>
<feature type="transmembrane region" description="Helical" evidence="3">
    <location>
        <begin position="545"/>
        <end position="565"/>
    </location>
</feature>
<feature type="topological domain" description="Vacuolar" evidence="10">
    <location>
        <begin position="566"/>
        <end position="614"/>
    </location>
</feature>
<feature type="transmembrane region" description="Helical" evidence="3">
    <location>
        <begin position="615"/>
        <end position="634"/>
    </location>
</feature>
<feature type="topological domain" description="Cytoplasmic" evidence="10">
    <location>
        <begin position="635"/>
        <end position="640"/>
    </location>
</feature>
<feature type="transmembrane region" description="Helical" evidence="3">
    <location>
        <begin position="641"/>
        <end position="663"/>
    </location>
</feature>
<feature type="topological domain" description="Vacuolar" evidence="10">
    <location>
        <begin position="664"/>
        <end position="673"/>
    </location>
</feature>
<feature type="transmembrane region" description="Helical" evidence="3">
    <location>
        <begin position="674"/>
        <end position="694"/>
    </location>
</feature>
<feature type="topological domain" description="Cytoplasmic" evidence="10">
    <location>
        <begin position="695"/>
        <end position="890"/>
    </location>
</feature>
<feature type="region of interest" description="Disordered" evidence="4">
    <location>
        <begin position="1"/>
        <end position="163"/>
    </location>
</feature>
<feature type="region of interest" description="Disordered" evidence="4">
    <location>
        <begin position="280"/>
        <end position="300"/>
    </location>
</feature>
<feature type="region of interest" description="Disordered" evidence="4">
    <location>
        <begin position="798"/>
        <end position="871"/>
    </location>
</feature>
<feature type="compositionally biased region" description="Basic residues" evidence="4">
    <location>
        <begin position="8"/>
        <end position="19"/>
    </location>
</feature>
<feature type="compositionally biased region" description="Low complexity" evidence="4">
    <location>
        <begin position="102"/>
        <end position="126"/>
    </location>
</feature>
<feature type="compositionally biased region" description="Low complexity" evidence="4">
    <location>
        <begin position="134"/>
        <end position="156"/>
    </location>
</feature>
<feature type="glycosylation site" description="N-linked (GlcNAc...) asparagine" evidence="3">
    <location>
        <position position="581"/>
    </location>
</feature>
<feature type="disulfide bond" evidence="2">
    <location>
        <begin position="585"/>
        <end position="609"/>
    </location>
</feature>
<feature type="disulfide bond" evidence="2">
    <location>
        <begin position="596"/>
        <end position="606"/>
    </location>
</feature>
<reference evidence="11" key="1">
    <citation type="journal article" date="2014" name="Eukaryot. Cell">
        <title>Characterization of the chloroquine resistance transporter homologue in Toxoplasma gondii.</title>
        <authorList>
            <person name="Warring S.D."/>
            <person name="Dou Z."/>
            <person name="Carruthers V.B."/>
            <person name="McFadden G.I."/>
            <person name="van Dooren G.G."/>
        </authorList>
    </citation>
    <scope>NUCLEOTIDE SEQUENCE [MRNA]</scope>
    <scope>SUBCELLULAR LOCATION</scope>
    <scope>DISRUPTION PHENOTYPE</scope>
    <source>
        <strain evidence="11">RH</strain>
    </source>
</reference>
<reference evidence="10" key="2">
    <citation type="journal article" date="2019" name="MBio">
        <title>Role of Toxoplasma gondii Chloroquine Resistance Transporter in Bradyzoite Viability and Digestive Vacuole Maintenance.</title>
        <authorList>
            <person name="Kannan G."/>
            <person name="Di Cristina M."/>
            <person name="Schultz A.J."/>
            <person name="Huynh M.H."/>
            <person name="Wang F."/>
            <person name="Schultz T.L."/>
            <person name="Lunghi M."/>
            <person name="Coppens I."/>
            <person name="Carruthers V.B."/>
        </authorList>
    </citation>
    <scope>FUNCTION</scope>
    <scope>DISRUPTION PHENOTYPE</scope>
</reference>
<reference evidence="10" key="3">
    <citation type="journal article" date="2019" name="PLoS Pathog.">
        <title>An ortholog of Plasmodium falciparum chloroquine resistance transporter (PfCRT) plays a key role in maintaining the integrity of the endolysosomal system in Toxoplasma gondii to facilitate host invasion.</title>
        <authorList>
            <person name="Thornton L.B."/>
            <person name="Teehan P."/>
            <person name="Floyd K."/>
            <person name="Cochrane C."/>
            <person name="Bergmann A."/>
            <person name="Riegel B."/>
            <person name="Stasic A.J."/>
            <person name="Di Cristina M."/>
            <person name="Moreno S.N.J."/>
            <person name="Roepe P.D."/>
            <person name="Dou Z."/>
        </authorList>
    </citation>
    <scope>FUNCTION</scope>
    <scope>DISRUPTION PHENOTYPE</scope>
</reference>
<name>CRT_TOXGO</name>
<gene>
    <name evidence="10" type="primary">CRT</name>
</gene>
<comment type="function">
    <text evidence="1 6 7">Nutrient transporter (By similarity). Involved in maintaining the osmotic homeostasis of the digestive vacuole (PubMed:31170269, PubMed:31387907). Required for the proper organization of the endolysosomal system and, in turn, indirectly for microneme secretion and parasite invasion (PubMed:31170269). Required for bradyzoite viability and cyst development (PubMed:31387907).</text>
</comment>
<comment type="subcellular location">
    <subcellularLocation>
        <location evidence="5">Vacuole membrane</location>
        <topology evidence="3">Multi-pass membrane protein</topology>
    </subcellularLocation>
    <text evidence="5">In intracellular parasites, localizes to a population of multiple dynamic vesicles originated from the vacuole compartment (PubMed:24859994). In extracellular parasites, also localizes to the vacuole structures which appear as one large or, occasionally, a few smaller vesicles (PubMed:24859994).</text>
</comment>
<comment type="disruption phenotype">
    <text evidence="5 6 7">Enlarged vacuole compartment (PubMed:24859994, PubMed:31170269, PubMed:31387907). Disrupted endolysosomal system (PubMed:31170269). Reduced growth rates (PubMed:24859994). Slower invasion kinetics (PubMed:31170269). Reduced virulence in mice (PubMed:31170269). Impaired secretion of microneme proteins (PubMed:31170269). Reduced transcription and translation of several endolysosomal proteases (PubMed:31170269). Decreased bradyzoite viability in vitro (PubMed:31387907). Reduction in cyst burden in mouse brains after infection (PubMed:31387907). No significant effects on parasite replication at 28 and 40 hours post-infection (PubMed:31170269). No significant effects on parasite egress from the host cell (PubMed:31170269). No significant effects on the rate and efficiency of tachyzoite to bradyzoite conversion and bradyzoite replication (PubMed:31387907). No significant effects on the vacuole digestive function (PubMed:31387907).</text>
</comment>
<comment type="miscellaneous">
    <text evidence="6">Can function as a drug transporter (PubMed:31170269). Can transport chloroquine (PubMed:31170269).</text>
</comment>
<comment type="similarity">
    <text evidence="10">Belongs to the CRT-like transporter family.</text>
</comment>
<evidence type="ECO:0000250" key="1">
    <source>
        <dbReference type="UniProtKB" id="Q9N623"/>
    </source>
</evidence>
<evidence type="ECO:0000250" key="2">
    <source>
        <dbReference type="UniProtKB" id="W7FI62"/>
    </source>
</evidence>
<evidence type="ECO:0000255" key="3"/>
<evidence type="ECO:0000256" key="4">
    <source>
        <dbReference type="SAM" id="MobiDB-lite"/>
    </source>
</evidence>
<evidence type="ECO:0000269" key="5">
    <source>
    </source>
</evidence>
<evidence type="ECO:0000269" key="6">
    <source>
    </source>
</evidence>
<evidence type="ECO:0000269" key="7">
    <source>
    </source>
</evidence>
<evidence type="ECO:0000303" key="8">
    <source>
    </source>
</evidence>
<evidence type="ECO:0000303" key="9">
    <source>
    </source>
</evidence>
<evidence type="ECO:0000305" key="10"/>
<evidence type="ECO:0000312" key="11">
    <source>
        <dbReference type="EMBL" id="AIA26429.1"/>
    </source>
</evidence>
<proteinExistence type="evidence at transcript level"/>
<protein>
    <recommendedName>
        <fullName evidence="9">Chloroquine resistance transporter</fullName>
        <shortName evidence="8 9">TgCRT</shortName>
    </recommendedName>
</protein>